<comment type="function">
    <text evidence="1">Specifically methylates the cytosine at position 1407 (m5C1407) of 16S rRNA.</text>
</comment>
<comment type="catalytic activity">
    <reaction evidence="1">
        <text>cytidine(1407) in 16S rRNA + S-adenosyl-L-methionine = 5-methylcytidine(1407) in 16S rRNA + S-adenosyl-L-homocysteine + H(+)</text>
        <dbReference type="Rhea" id="RHEA:42756"/>
        <dbReference type="Rhea" id="RHEA-COMP:10223"/>
        <dbReference type="Rhea" id="RHEA-COMP:10224"/>
        <dbReference type="ChEBI" id="CHEBI:15378"/>
        <dbReference type="ChEBI" id="CHEBI:57856"/>
        <dbReference type="ChEBI" id="CHEBI:59789"/>
        <dbReference type="ChEBI" id="CHEBI:74483"/>
        <dbReference type="ChEBI" id="CHEBI:82748"/>
        <dbReference type="EC" id="2.1.1.178"/>
    </reaction>
</comment>
<comment type="subcellular location">
    <subcellularLocation>
        <location evidence="1">Cytoplasm</location>
    </subcellularLocation>
</comment>
<comment type="similarity">
    <text evidence="1">Belongs to the class I-like SAM-binding methyltransferase superfamily. RsmB/NOP family.</text>
</comment>
<comment type="sequence caution" evidence="2">
    <conflict type="erroneous initiation">
        <sequence resource="EMBL-CDS" id="ABM24635"/>
    </conflict>
</comment>
<reference key="1">
    <citation type="submission" date="2006-12" db="EMBL/GenBank/DDBJ databases">
        <title>Complete sequence of Shewanella sp. W3-18-1.</title>
        <authorList>
            <consortium name="US DOE Joint Genome Institute"/>
            <person name="Copeland A."/>
            <person name="Lucas S."/>
            <person name="Lapidus A."/>
            <person name="Barry K."/>
            <person name="Detter J.C."/>
            <person name="Glavina del Rio T."/>
            <person name="Hammon N."/>
            <person name="Israni S."/>
            <person name="Dalin E."/>
            <person name="Tice H."/>
            <person name="Pitluck S."/>
            <person name="Chain P."/>
            <person name="Malfatti S."/>
            <person name="Shin M."/>
            <person name="Vergez L."/>
            <person name="Schmutz J."/>
            <person name="Larimer F."/>
            <person name="Land M."/>
            <person name="Hauser L."/>
            <person name="Kyrpides N."/>
            <person name="Lykidis A."/>
            <person name="Tiedje J."/>
            <person name="Richardson P."/>
        </authorList>
    </citation>
    <scope>NUCLEOTIDE SEQUENCE [LARGE SCALE GENOMIC DNA]</scope>
    <source>
        <strain>W3-18-1</strain>
    </source>
</reference>
<evidence type="ECO:0000255" key="1">
    <source>
        <dbReference type="HAMAP-Rule" id="MF_01579"/>
    </source>
</evidence>
<evidence type="ECO:0000305" key="2"/>
<keyword id="KW-0963">Cytoplasm</keyword>
<keyword id="KW-0489">Methyltransferase</keyword>
<keyword id="KW-0694">RNA-binding</keyword>
<keyword id="KW-0698">rRNA processing</keyword>
<keyword id="KW-0949">S-adenosyl-L-methionine</keyword>
<keyword id="KW-0808">Transferase</keyword>
<organism>
    <name type="scientific">Shewanella sp. (strain W3-18-1)</name>
    <dbReference type="NCBI Taxonomy" id="351745"/>
    <lineage>
        <taxon>Bacteria</taxon>
        <taxon>Pseudomonadati</taxon>
        <taxon>Pseudomonadota</taxon>
        <taxon>Gammaproteobacteria</taxon>
        <taxon>Alteromonadales</taxon>
        <taxon>Shewanellaceae</taxon>
        <taxon>Shewanella</taxon>
    </lineage>
</organism>
<proteinExistence type="inferred from homology"/>
<dbReference type="EC" id="2.1.1.178" evidence="1"/>
<dbReference type="EMBL" id="CP000503">
    <property type="protein sequence ID" value="ABM24635.1"/>
    <property type="status" value="ALT_INIT"/>
    <property type="molecule type" value="Genomic_DNA"/>
</dbReference>
<dbReference type="SMR" id="A1RIZ0"/>
<dbReference type="KEGG" id="shw:Sputw3181_1799"/>
<dbReference type="HOGENOM" id="CLU_005316_6_2_6"/>
<dbReference type="Proteomes" id="UP000002597">
    <property type="component" value="Chromosome"/>
</dbReference>
<dbReference type="GO" id="GO:0005737">
    <property type="term" value="C:cytoplasm"/>
    <property type="evidence" value="ECO:0007669"/>
    <property type="project" value="UniProtKB-SubCell"/>
</dbReference>
<dbReference type="GO" id="GO:0003723">
    <property type="term" value="F:RNA binding"/>
    <property type="evidence" value="ECO:0007669"/>
    <property type="project" value="UniProtKB-KW"/>
</dbReference>
<dbReference type="GO" id="GO:0009383">
    <property type="term" value="F:rRNA (cytosine-C5-)-methyltransferase activity"/>
    <property type="evidence" value="ECO:0007669"/>
    <property type="project" value="TreeGrafter"/>
</dbReference>
<dbReference type="GO" id="GO:0070475">
    <property type="term" value="P:rRNA base methylation"/>
    <property type="evidence" value="ECO:0007669"/>
    <property type="project" value="TreeGrafter"/>
</dbReference>
<dbReference type="CDD" id="cd02440">
    <property type="entry name" value="AdoMet_MTases"/>
    <property type="match status" value="1"/>
</dbReference>
<dbReference type="Gene3D" id="3.10.450.720">
    <property type="match status" value="1"/>
</dbReference>
<dbReference type="Gene3D" id="3.40.50.150">
    <property type="entry name" value="Vaccinia Virus protein VP39"/>
    <property type="match status" value="1"/>
</dbReference>
<dbReference type="HAMAP" id="MF_01579">
    <property type="entry name" value="16SrRNA_methyltr_F"/>
    <property type="match status" value="1"/>
</dbReference>
<dbReference type="InterPro" id="IPR031341">
    <property type="entry name" value="Methyltr_RsmF_N"/>
</dbReference>
<dbReference type="InterPro" id="IPR049560">
    <property type="entry name" value="MeTrfase_RsmB-F_NOP2_cat"/>
</dbReference>
<dbReference type="InterPro" id="IPR001678">
    <property type="entry name" value="MeTrfase_RsmB-F_NOP2_dom"/>
</dbReference>
<dbReference type="InterPro" id="IPR027391">
    <property type="entry name" value="Nol1_Nop2_Fmu_2"/>
</dbReference>
<dbReference type="InterPro" id="IPR011023">
    <property type="entry name" value="Nop2p"/>
</dbReference>
<dbReference type="InterPro" id="IPR023267">
    <property type="entry name" value="RCMT"/>
</dbReference>
<dbReference type="InterPro" id="IPR023545">
    <property type="entry name" value="rRNA_ssu_MeTfrase_F"/>
</dbReference>
<dbReference type="InterPro" id="IPR029063">
    <property type="entry name" value="SAM-dependent_MTases_sf"/>
</dbReference>
<dbReference type="InterPro" id="IPR048457">
    <property type="entry name" value="YebU_pre-PUA_dom"/>
</dbReference>
<dbReference type="NCBIfam" id="TIGR00446">
    <property type="entry name" value="nop2p"/>
    <property type="match status" value="1"/>
</dbReference>
<dbReference type="NCBIfam" id="NF008898">
    <property type="entry name" value="PRK11933.1"/>
    <property type="match status" value="1"/>
</dbReference>
<dbReference type="PANTHER" id="PTHR22807:SF30">
    <property type="entry name" value="28S RRNA (CYTOSINE(4447)-C(5))-METHYLTRANSFERASE-RELATED"/>
    <property type="match status" value="1"/>
</dbReference>
<dbReference type="PANTHER" id="PTHR22807">
    <property type="entry name" value="NOP2 YEAST -RELATED NOL1/NOP2/FMU SUN DOMAIN-CONTAINING"/>
    <property type="match status" value="1"/>
</dbReference>
<dbReference type="Pfam" id="PF01189">
    <property type="entry name" value="Methyltr_RsmB-F"/>
    <property type="match status" value="1"/>
</dbReference>
<dbReference type="Pfam" id="PF17125">
    <property type="entry name" value="Methyltr_RsmF_N"/>
    <property type="match status" value="1"/>
</dbReference>
<dbReference type="Pfam" id="PF13636">
    <property type="entry name" value="Methyltranf_PUA"/>
    <property type="match status" value="1"/>
</dbReference>
<dbReference type="Pfam" id="PF21150">
    <property type="entry name" value="YebU_pre-PUA_dom"/>
    <property type="match status" value="1"/>
</dbReference>
<dbReference type="PRINTS" id="PR02008">
    <property type="entry name" value="RCMTFAMILY"/>
</dbReference>
<dbReference type="SUPFAM" id="SSF53335">
    <property type="entry name" value="S-adenosyl-L-methionine-dependent methyltransferases"/>
    <property type="match status" value="1"/>
</dbReference>
<dbReference type="PROSITE" id="PS51686">
    <property type="entry name" value="SAM_MT_RSMB_NOP"/>
    <property type="match status" value="1"/>
</dbReference>
<sequence length="486" mass="54101">MAQLNQNFIDTITQELPAHLSMDDFIAACDRPLRRSIRVNTLKISADDFKTLMQPKGWTFDPIPWCKDGFWISYDEEEQLGNALEHIQGLFYIQEASSMLPPTALFTPSAFTPSAKWQCVLDLASAPGSKTTQIAALMHNSGLLIANEYSASRVKVLHANVLRMGASHCALTHFDGRVFGEYLYESFDAVLIDAPCGGEGTVRKDADALKHWSLNDVLAISETQKALIESAFLALKPGGSLVYSTCTLNRLENQGVCEYLKQTYGDAVQFESLSDLFEGAERATTPEGFLHVWPQIYDSEGFFVAKLTKTASVPRLQPEPTLQKNFPFTPATTKQAQGIKDYFQQDLGISLPDDLIMVRDDEFWLFPHEFRDFIGRMRFQRIGIKLADSTKHGFKVRHEAIIALAGKQLSPTAKTVDLSDVEAKEYLMGRDISLNTAVKAQGEVIVCYGGAPLGMAKHLGNRLKNNLPRDLVKDKVLLLSEQIKSL</sequence>
<name>RSMF_SHESW</name>
<feature type="chain" id="PRO_0000285016" description="Ribosomal RNA small subunit methyltransferase F">
    <location>
        <begin position="1"/>
        <end position="486"/>
    </location>
</feature>
<feature type="active site" description="Nucleophile" evidence="1">
    <location>
        <position position="246"/>
    </location>
</feature>
<feature type="binding site" evidence="1">
    <location>
        <begin position="124"/>
        <end position="130"/>
    </location>
    <ligand>
        <name>S-adenosyl-L-methionine</name>
        <dbReference type="ChEBI" id="CHEBI:59789"/>
    </ligand>
</feature>
<feature type="binding site" evidence="1">
    <location>
        <position position="148"/>
    </location>
    <ligand>
        <name>S-adenosyl-L-methionine</name>
        <dbReference type="ChEBI" id="CHEBI:59789"/>
    </ligand>
</feature>
<feature type="binding site" evidence="1">
    <location>
        <position position="175"/>
    </location>
    <ligand>
        <name>S-adenosyl-L-methionine</name>
        <dbReference type="ChEBI" id="CHEBI:59789"/>
    </ligand>
</feature>
<feature type="binding site" evidence="1">
    <location>
        <position position="193"/>
    </location>
    <ligand>
        <name>S-adenosyl-L-methionine</name>
        <dbReference type="ChEBI" id="CHEBI:59789"/>
    </ligand>
</feature>
<protein>
    <recommendedName>
        <fullName evidence="1">Ribosomal RNA small subunit methyltransferase F</fullName>
        <ecNumber evidence="1">2.1.1.178</ecNumber>
    </recommendedName>
    <alternativeName>
        <fullName evidence="1">16S rRNA m5C1407 methyltransferase</fullName>
    </alternativeName>
    <alternativeName>
        <fullName evidence="1">rRNA (cytosine-C(5)-)-methyltransferase RsmF</fullName>
    </alternativeName>
</protein>
<gene>
    <name evidence="1" type="primary">rsmF</name>
    <name type="ordered locus">Sputw3181_1799</name>
</gene>
<accession>A1RIZ0</accession>